<accession>A5UMN0</accession>
<proteinExistence type="inferred from homology"/>
<feature type="chain" id="PRO_1000015863" description="Glutamyl-tRNA(Gln) amidotransferase subunit A">
    <location>
        <begin position="1"/>
        <end position="456"/>
    </location>
</feature>
<feature type="active site" description="Charge relay system" evidence="1">
    <location>
        <position position="74"/>
    </location>
</feature>
<feature type="active site" description="Charge relay system" evidence="1">
    <location>
        <position position="149"/>
    </location>
</feature>
<feature type="active site" description="Acyl-ester intermediate" evidence="1">
    <location>
        <position position="173"/>
    </location>
</feature>
<dbReference type="EC" id="6.3.5.7" evidence="1"/>
<dbReference type="EMBL" id="CP000678">
    <property type="protein sequence ID" value="ABQ87458.1"/>
    <property type="molecule type" value="Genomic_DNA"/>
</dbReference>
<dbReference type="RefSeq" id="WP_011954389.1">
    <property type="nucleotide sequence ID" value="NZ_CP117965.1"/>
</dbReference>
<dbReference type="SMR" id="A5UMN0"/>
<dbReference type="STRING" id="420247.Msm_1253"/>
<dbReference type="EnsemblBacteria" id="ABQ87458">
    <property type="protein sequence ID" value="ABQ87458"/>
    <property type="gene ID" value="Msm_1253"/>
</dbReference>
<dbReference type="GeneID" id="78817906"/>
<dbReference type="KEGG" id="msi:Msm_1253"/>
<dbReference type="PATRIC" id="fig|420247.28.peg.1251"/>
<dbReference type="eggNOG" id="arCOG01717">
    <property type="taxonomic scope" value="Archaea"/>
</dbReference>
<dbReference type="HOGENOM" id="CLU_009600_0_3_2"/>
<dbReference type="Proteomes" id="UP000001992">
    <property type="component" value="Chromosome"/>
</dbReference>
<dbReference type="GO" id="GO:0030956">
    <property type="term" value="C:glutamyl-tRNA(Gln) amidotransferase complex"/>
    <property type="evidence" value="ECO:0007669"/>
    <property type="project" value="InterPro"/>
</dbReference>
<dbReference type="GO" id="GO:0005524">
    <property type="term" value="F:ATP binding"/>
    <property type="evidence" value="ECO:0007669"/>
    <property type="project" value="UniProtKB-KW"/>
</dbReference>
<dbReference type="GO" id="GO:0050567">
    <property type="term" value="F:glutaminyl-tRNA synthase (glutamine-hydrolyzing) activity"/>
    <property type="evidence" value="ECO:0007669"/>
    <property type="project" value="UniProtKB-UniRule"/>
</dbReference>
<dbReference type="GO" id="GO:0006412">
    <property type="term" value="P:translation"/>
    <property type="evidence" value="ECO:0007669"/>
    <property type="project" value="UniProtKB-UniRule"/>
</dbReference>
<dbReference type="Gene3D" id="3.90.1300.10">
    <property type="entry name" value="Amidase signature (AS) domain"/>
    <property type="match status" value="1"/>
</dbReference>
<dbReference type="HAMAP" id="MF_00120">
    <property type="entry name" value="GatA"/>
    <property type="match status" value="1"/>
</dbReference>
<dbReference type="InterPro" id="IPR000120">
    <property type="entry name" value="Amidase"/>
</dbReference>
<dbReference type="InterPro" id="IPR020556">
    <property type="entry name" value="Amidase_CS"/>
</dbReference>
<dbReference type="InterPro" id="IPR023631">
    <property type="entry name" value="Amidase_dom"/>
</dbReference>
<dbReference type="InterPro" id="IPR036928">
    <property type="entry name" value="AS_sf"/>
</dbReference>
<dbReference type="InterPro" id="IPR004412">
    <property type="entry name" value="GatA"/>
</dbReference>
<dbReference type="NCBIfam" id="TIGR00132">
    <property type="entry name" value="gatA"/>
    <property type="match status" value="1"/>
</dbReference>
<dbReference type="PANTHER" id="PTHR11895:SF7">
    <property type="entry name" value="GLUTAMYL-TRNA(GLN) AMIDOTRANSFERASE SUBUNIT A, MITOCHONDRIAL"/>
    <property type="match status" value="1"/>
</dbReference>
<dbReference type="PANTHER" id="PTHR11895">
    <property type="entry name" value="TRANSAMIDASE"/>
    <property type="match status" value="1"/>
</dbReference>
<dbReference type="Pfam" id="PF01425">
    <property type="entry name" value="Amidase"/>
    <property type="match status" value="1"/>
</dbReference>
<dbReference type="SUPFAM" id="SSF75304">
    <property type="entry name" value="Amidase signature (AS) enzymes"/>
    <property type="match status" value="1"/>
</dbReference>
<dbReference type="PROSITE" id="PS00571">
    <property type="entry name" value="AMIDASES"/>
    <property type="match status" value="1"/>
</dbReference>
<comment type="function">
    <text evidence="1">Allows the formation of correctly charged Gln-tRNA(Gln) through the transamidation of misacylated Glu-tRNA(Gln) in organisms which lack glutaminyl-tRNA synthetase. The reaction takes place in the presence of glutamine and ATP through an activated gamma-phospho-Glu-tRNA(Gln).</text>
</comment>
<comment type="catalytic activity">
    <reaction evidence="1">
        <text>L-glutamyl-tRNA(Gln) + L-glutamine + ATP + H2O = L-glutaminyl-tRNA(Gln) + L-glutamate + ADP + phosphate + H(+)</text>
        <dbReference type="Rhea" id="RHEA:17521"/>
        <dbReference type="Rhea" id="RHEA-COMP:9681"/>
        <dbReference type="Rhea" id="RHEA-COMP:9684"/>
        <dbReference type="ChEBI" id="CHEBI:15377"/>
        <dbReference type="ChEBI" id="CHEBI:15378"/>
        <dbReference type="ChEBI" id="CHEBI:29985"/>
        <dbReference type="ChEBI" id="CHEBI:30616"/>
        <dbReference type="ChEBI" id="CHEBI:43474"/>
        <dbReference type="ChEBI" id="CHEBI:58359"/>
        <dbReference type="ChEBI" id="CHEBI:78520"/>
        <dbReference type="ChEBI" id="CHEBI:78521"/>
        <dbReference type="ChEBI" id="CHEBI:456216"/>
        <dbReference type="EC" id="6.3.5.7"/>
    </reaction>
</comment>
<comment type="subunit">
    <text evidence="1">Heterotrimer of A, B and C subunits.</text>
</comment>
<comment type="similarity">
    <text evidence="1">Belongs to the amidase family. GatA subfamily.</text>
</comment>
<sequence>MNVIEKLNSIQNKEMTAKENVENFIKVIDEKNEELNIFLEVNKESALKQAEAIDEKIANGEKVGFLSGLVFGIKANINVEDYIISAASKTLDNYFGSYNATVIDKILAQDGIILGITNMDEFAAGSSTETSCFGPTQNPAAPGRIPGGSSGGSAAAVAAEMCDIALGSDTGGSIRNPASHCGVVGFKPTYGAVSRQGLLDLSMSLDQIGPLSNDTSGIALALNAISDYDETECTTLHGKRPDFTSALEEKSLEGMKIAVCKEFIDVTDAEINVAVNKAIHKLVEAGAELVEVSFDNIDLCLPTYYLINYVEFFSATRKYDGRDYGYRIEDVCGEEVLRRIEIGSYISQKEYSGKFYKKALQARSLIRDEINAMLENVDLIVGPTVPKLPHKIGDELTPMEMYAYDVLTVIANLAGIPAGSIKAGEVDGIPVGLQIQAKPLDDLKIIKAMSVFENEN</sequence>
<reference key="1">
    <citation type="journal article" date="2007" name="Proc. Natl. Acad. Sci. U.S.A.">
        <title>Genomic and metabolic adaptations of Methanobrevibacter smithii to the human gut.</title>
        <authorList>
            <person name="Samuel B.S."/>
            <person name="Hansen E.E."/>
            <person name="Manchester J.K."/>
            <person name="Coutinho P.M."/>
            <person name="Henrissat B."/>
            <person name="Fulton R."/>
            <person name="Latreille P."/>
            <person name="Kim K."/>
            <person name="Wilson R.K."/>
            <person name="Gordon J.I."/>
        </authorList>
    </citation>
    <scope>NUCLEOTIDE SEQUENCE [LARGE SCALE GENOMIC DNA]</scope>
    <source>
        <strain>ATCC 35061 / DSM 861 / OCM 144 / PS</strain>
    </source>
</reference>
<protein>
    <recommendedName>
        <fullName evidence="1">Glutamyl-tRNA(Gln) amidotransferase subunit A</fullName>
        <shortName evidence="1">Glu-ADT subunit A</shortName>
        <ecNumber evidence="1">6.3.5.7</ecNumber>
    </recommendedName>
</protein>
<name>GATA_METS3</name>
<gene>
    <name evidence="1" type="primary">gatA</name>
    <name type="ordered locus">Msm_1253</name>
</gene>
<keyword id="KW-0067">ATP-binding</keyword>
<keyword id="KW-0436">Ligase</keyword>
<keyword id="KW-0547">Nucleotide-binding</keyword>
<keyword id="KW-0648">Protein biosynthesis</keyword>
<evidence type="ECO:0000255" key="1">
    <source>
        <dbReference type="HAMAP-Rule" id="MF_00120"/>
    </source>
</evidence>
<organism>
    <name type="scientific">Methanobrevibacter smithii (strain ATCC 35061 / DSM 861 / OCM 144 / PS)</name>
    <dbReference type="NCBI Taxonomy" id="420247"/>
    <lineage>
        <taxon>Archaea</taxon>
        <taxon>Methanobacteriati</taxon>
        <taxon>Methanobacteriota</taxon>
        <taxon>Methanomada group</taxon>
        <taxon>Methanobacteria</taxon>
        <taxon>Methanobacteriales</taxon>
        <taxon>Methanobacteriaceae</taxon>
        <taxon>Methanobrevibacter</taxon>
    </lineage>
</organism>